<proteinExistence type="inferred from homology"/>
<keyword id="KW-0997">Cell inner membrane</keyword>
<keyword id="KW-1003">Cell membrane</keyword>
<keyword id="KW-0472">Membrane</keyword>
<keyword id="KW-0520">NAD</keyword>
<keyword id="KW-0874">Quinone</keyword>
<keyword id="KW-1278">Translocase</keyword>
<keyword id="KW-0812">Transmembrane</keyword>
<keyword id="KW-1133">Transmembrane helix</keyword>
<keyword id="KW-0813">Transport</keyword>
<keyword id="KW-0830">Ubiquinone</keyword>
<comment type="function">
    <text evidence="1">NDH-1 shuttles electrons from NADH, via FMN and iron-sulfur (Fe-S) centers, to quinones in the respiratory chain. The immediate electron acceptor for the enzyme in this species is believed to be ubiquinone. Couples the redox reaction to proton translocation (for every two electrons transferred, four hydrogen ions are translocated across the cytoplasmic membrane), and thus conserves the redox energy in a proton gradient.</text>
</comment>
<comment type="catalytic activity">
    <reaction evidence="1">
        <text>a quinone + NADH + 5 H(+)(in) = a quinol + NAD(+) + 4 H(+)(out)</text>
        <dbReference type="Rhea" id="RHEA:57888"/>
        <dbReference type="ChEBI" id="CHEBI:15378"/>
        <dbReference type="ChEBI" id="CHEBI:24646"/>
        <dbReference type="ChEBI" id="CHEBI:57540"/>
        <dbReference type="ChEBI" id="CHEBI:57945"/>
        <dbReference type="ChEBI" id="CHEBI:132124"/>
    </reaction>
</comment>
<comment type="subunit">
    <text evidence="1">NDH-1 is composed of 13 different subunits. Subunits NuoA, H, J, K, L, M, N constitute the membrane sector of the complex.</text>
</comment>
<comment type="subcellular location">
    <subcellularLocation>
        <location evidence="1">Cell inner membrane</location>
        <topology evidence="1">Multi-pass membrane protein</topology>
    </subcellularLocation>
</comment>
<comment type="similarity">
    <text evidence="1">Belongs to the complex I subunit 2 family.</text>
</comment>
<dbReference type="EC" id="7.1.1.-" evidence="1"/>
<dbReference type="EMBL" id="CP001396">
    <property type="protein sequence ID" value="ACR63877.1"/>
    <property type="molecule type" value="Genomic_DNA"/>
</dbReference>
<dbReference type="RefSeq" id="WP_000156701.1">
    <property type="nucleotide sequence ID" value="NC_012759.1"/>
</dbReference>
<dbReference type="SMR" id="C4ZUB9"/>
<dbReference type="GeneID" id="75205678"/>
<dbReference type="KEGG" id="ebw:BWG_2050"/>
<dbReference type="HOGENOM" id="CLU_007100_1_5_6"/>
<dbReference type="GO" id="GO:0005886">
    <property type="term" value="C:plasma membrane"/>
    <property type="evidence" value="ECO:0007669"/>
    <property type="project" value="UniProtKB-SubCell"/>
</dbReference>
<dbReference type="GO" id="GO:0008137">
    <property type="term" value="F:NADH dehydrogenase (ubiquinone) activity"/>
    <property type="evidence" value="ECO:0007669"/>
    <property type="project" value="InterPro"/>
</dbReference>
<dbReference type="GO" id="GO:0050136">
    <property type="term" value="F:NADH:ubiquinone reductase (non-electrogenic) activity"/>
    <property type="evidence" value="ECO:0007669"/>
    <property type="project" value="UniProtKB-UniRule"/>
</dbReference>
<dbReference type="GO" id="GO:0048038">
    <property type="term" value="F:quinone binding"/>
    <property type="evidence" value="ECO:0007669"/>
    <property type="project" value="UniProtKB-KW"/>
</dbReference>
<dbReference type="GO" id="GO:0042773">
    <property type="term" value="P:ATP synthesis coupled electron transport"/>
    <property type="evidence" value="ECO:0007669"/>
    <property type="project" value="InterPro"/>
</dbReference>
<dbReference type="HAMAP" id="MF_00445">
    <property type="entry name" value="NDH1_NuoN_1"/>
    <property type="match status" value="1"/>
</dbReference>
<dbReference type="InterPro" id="IPR010096">
    <property type="entry name" value="NADH-Q_OxRdtase_suN/2"/>
</dbReference>
<dbReference type="InterPro" id="IPR001750">
    <property type="entry name" value="ND/Mrp_TM"/>
</dbReference>
<dbReference type="NCBIfam" id="TIGR01770">
    <property type="entry name" value="NDH_I_N"/>
    <property type="match status" value="1"/>
</dbReference>
<dbReference type="NCBIfam" id="NF004439">
    <property type="entry name" value="PRK05777.1-1"/>
    <property type="match status" value="1"/>
</dbReference>
<dbReference type="PANTHER" id="PTHR22773">
    <property type="entry name" value="NADH DEHYDROGENASE"/>
    <property type="match status" value="1"/>
</dbReference>
<dbReference type="Pfam" id="PF00361">
    <property type="entry name" value="Proton_antipo_M"/>
    <property type="match status" value="1"/>
</dbReference>
<protein>
    <recommendedName>
        <fullName evidence="1">NADH-quinone oxidoreductase subunit N</fullName>
        <ecNumber evidence="1">7.1.1.-</ecNumber>
    </recommendedName>
    <alternativeName>
        <fullName evidence="1">NADH dehydrogenase I subunit N</fullName>
    </alternativeName>
    <alternativeName>
        <fullName evidence="1">NDH-1 subunit N</fullName>
    </alternativeName>
</protein>
<reference key="1">
    <citation type="journal article" date="2009" name="J. Bacteriol.">
        <title>Genomic sequencing reveals regulatory mutations and recombinational events in the widely used MC4100 lineage of Escherichia coli K-12.</title>
        <authorList>
            <person name="Ferenci T."/>
            <person name="Zhou Z."/>
            <person name="Betteridge T."/>
            <person name="Ren Y."/>
            <person name="Liu Y."/>
            <person name="Feng L."/>
            <person name="Reeves P.R."/>
            <person name="Wang L."/>
        </authorList>
    </citation>
    <scope>NUCLEOTIDE SEQUENCE [LARGE SCALE GENOMIC DNA]</scope>
    <source>
        <strain>K12 / MC4100 / BW2952</strain>
    </source>
</reference>
<name>NUON_ECOBW</name>
<gene>
    <name evidence="1" type="primary">nuoN</name>
    <name type="ordered locus">BWG_2050</name>
</gene>
<feature type="chain" id="PRO_1000215282" description="NADH-quinone oxidoreductase subunit N">
    <location>
        <begin position="1"/>
        <end position="485"/>
    </location>
</feature>
<feature type="transmembrane region" description="Helical" evidence="1">
    <location>
        <begin position="8"/>
        <end position="28"/>
    </location>
</feature>
<feature type="transmembrane region" description="Helical" evidence="1">
    <location>
        <begin position="35"/>
        <end position="55"/>
    </location>
</feature>
<feature type="transmembrane region" description="Helical" evidence="1">
    <location>
        <begin position="71"/>
        <end position="91"/>
    </location>
</feature>
<feature type="transmembrane region" description="Helical" evidence="1">
    <location>
        <begin position="105"/>
        <end position="125"/>
    </location>
</feature>
<feature type="transmembrane region" description="Helical" evidence="1">
    <location>
        <begin position="127"/>
        <end position="147"/>
    </location>
</feature>
<feature type="transmembrane region" description="Helical" evidence="1">
    <location>
        <begin position="159"/>
        <end position="179"/>
    </location>
</feature>
<feature type="transmembrane region" description="Helical" evidence="1">
    <location>
        <begin position="203"/>
        <end position="223"/>
    </location>
</feature>
<feature type="transmembrane region" description="Helical" evidence="1">
    <location>
        <begin position="235"/>
        <end position="255"/>
    </location>
</feature>
<feature type="transmembrane region" description="Helical" evidence="1">
    <location>
        <begin position="271"/>
        <end position="291"/>
    </location>
</feature>
<feature type="transmembrane region" description="Helical" evidence="1">
    <location>
        <begin position="297"/>
        <end position="317"/>
    </location>
</feature>
<feature type="transmembrane region" description="Helical" evidence="1">
    <location>
        <begin position="326"/>
        <end position="346"/>
    </location>
</feature>
<feature type="transmembrane region" description="Helical" evidence="1">
    <location>
        <begin position="373"/>
        <end position="393"/>
    </location>
</feature>
<feature type="transmembrane region" description="Helical" evidence="1">
    <location>
        <begin position="408"/>
        <end position="430"/>
    </location>
</feature>
<feature type="transmembrane region" description="Helical" evidence="1">
    <location>
        <begin position="455"/>
        <end position="475"/>
    </location>
</feature>
<sequence>MTITPQNLIALLPLLIVGLTVVVVMLSIAWRRNHFLNATLSVIGLNAALVSLWFVGQAGAMDVTPLMRVDGFAMLYTGLVLLASLATCTFAYPWLEGYNDNKDEFYLLVLIAALGGILLANANHLASLFLGIELISLPLFGLVGYAFRQKRSLEASIKYTILSAAASSFLLFGMALVYAQSGDLSFVALGKNLGDGMLNEPLLLAGFGLMIVGLGFKLSLVPFHLWTPDVYQGAPAPVSTFLATASKIAIFGVVMRLFLYAPVGDSEAIRVVLAIIAFASIIFGNLMALSQTNIKRLLGYSSISHLGYLLVALIALQTGEMSMEAVGVYLAGYLFSSLGAFGVVSLMSSPYRGPDADSLFSYRGLFWHRPILAAVMTVMMLSLAGIPMTLGFIGKFYVLAVGVQAHLWWLVGAVVVGSAIGLYYYLRVAVSLYLHAPEQPGRDAPSNWQYSAGGIVVLISALLVLVLGVWPQPLISIVRLAMPLM</sequence>
<evidence type="ECO:0000255" key="1">
    <source>
        <dbReference type="HAMAP-Rule" id="MF_00445"/>
    </source>
</evidence>
<organism>
    <name type="scientific">Escherichia coli (strain K12 / MC4100 / BW2952)</name>
    <dbReference type="NCBI Taxonomy" id="595496"/>
    <lineage>
        <taxon>Bacteria</taxon>
        <taxon>Pseudomonadati</taxon>
        <taxon>Pseudomonadota</taxon>
        <taxon>Gammaproteobacteria</taxon>
        <taxon>Enterobacterales</taxon>
        <taxon>Enterobacteriaceae</taxon>
        <taxon>Escherichia</taxon>
    </lineage>
</organism>
<accession>C4ZUB9</accession>